<accession>P35656</accession>
<proteinExistence type="inferred from homology"/>
<comment type="function">
    <text>Involved in the secretion of PopA, a proteinaceous elicitor of the hypersensitivity response in plants.</text>
</comment>
<comment type="subcellular location">
    <subcellularLocation>
        <location evidence="2">Cell inner membrane</location>
        <topology evidence="2">Multi-pass membrane protein</topology>
    </subcellularLocation>
</comment>
<comment type="similarity">
    <text evidence="2">Belongs to the FHIPEP (flagella/HR/invasion proteins export pore) family.</text>
</comment>
<name>HRCV_RALN1</name>
<feature type="chain" id="PRO_0000190026" description="Hypersensitivity response secretion protein HrcV">
    <location>
        <begin position="1"/>
        <end position="690"/>
    </location>
</feature>
<feature type="transmembrane region" description="Helical" evidence="1">
    <location>
        <begin position="14"/>
        <end position="36"/>
    </location>
</feature>
<feature type="transmembrane region" description="Helical" evidence="1">
    <location>
        <begin position="48"/>
        <end position="72"/>
    </location>
</feature>
<feature type="transmembrane region" description="Helical" evidence="1">
    <location>
        <begin position="104"/>
        <end position="128"/>
    </location>
</feature>
<feature type="transmembrane region" description="Helical" evidence="1">
    <location>
        <begin position="196"/>
        <end position="216"/>
    </location>
</feature>
<feature type="transmembrane region" description="Helical" evidence="1">
    <location>
        <begin position="229"/>
        <end position="253"/>
    </location>
</feature>
<feature type="transmembrane region" description="Helical" evidence="1">
    <location>
        <begin position="291"/>
        <end position="315"/>
    </location>
</feature>
<keyword id="KW-0997">Cell inner membrane</keyword>
<keyword id="KW-1003">Cell membrane</keyword>
<keyword id="KW-0928">Hypersensitive response elicitation</keyword>
<keyword id="KW-0472">Membrane</keyword>
<keyword id="KW-0614">Plasmid</keyword>
<keyword id="KW-0653">Protein transport</keyword>
<keyword id="KW-1185">Reference proteome</keyword>
<keyword id="KW-0812">Transmembrane</keyword>
<keyword id="KW-1133">Transmembrane helix</keyword>
<keyword id="KW-0813">Transport</keyword>
<geneLocation type="plasmid">
    <name>megaplasmid Rsp</name>
</geneLocation>
<gene>
    <name type="primary">hrcV</name>
    <name type="synonym">hrpO</name>
    <name type="ordered locus">RSp0863</name>
    <name type="ORF">RS01634</name>
</gene>
<evidence type="ECO:0000255" key="1"/>
<evidence type="ECO:0000305" key="2"/>
<sequence>MAKKNAIQDFSGEIGIAALVVAVVALMVLPLPTMLIDALLGLNITLSVVLLMVTMYIPSATSLSAFPSLLLFTTLLRLSLNIASTKSILLHADAGHIIESFGKLVVGGNLVVGLVVFLIITTVQFIVIAKGSERVAEVGARFTLDAMPGKQMSIDADLRAGHLSPEEARKRRALLAMESQLHGGMDGAMKFVKGDAIAGLVITLVNILAGIVIGITYHNMTAGEAANRFAVLSIGDAMVSQIPSLLISVAAGVMITRVSDEEQAHKQSSLGMEIVRQLSTSARAMFTASALLMGFALVPGFPSFLFVALATLIFVFGYTLRNRAKEGDGDEGDALPALLREGSKGKAPTIAEQAPSFTVPVGVRLGAELAKGLDVPALDTAFQQGRHALAEALGLPFPGIAIWKADALQPDSYEVRVHDIPGEPVAVPDGHLLIPDLPEALRAQAVEAAGLPNHPAPHWIAPAHVAQDAALSATGQRVERVIADHVVHVLRRSAHLFVGLQETQWMLERVTTDYPGLVAEAQKAVPAQRIADVLRRLLEEQVPIRNMRAILESLVVWGPKEKDTLMLVEYVRGDLGRQIAHQATGGTRQMPAILLDLSVEQTVRQAIKPTPAGNFLTLDPQQVEAIIMRLRGIMQGNPVETPSALAIVTSMDIRRYVRRMIEPHLQALNVYSFQELGGYVDLRPVGKLVL</sequence>
<reference key="1">
    <citation type="journal article" date="1993" name="Mol. Gen. Genet.">
        <title>Homology between the HrpO protein of Pseudomonas solanacearum and bacterial proteins implicated in a signal peptide-independent secretion mechanism.</title>
        <authorList>
            <person name="Gough C.L."/>
            <person name="Genin S."/>
            <person name="Lopes V."/>
            <person name="Boucher C.A."/>
        </authorList>
    </citation>
    <scope>NUCLEOTIDE SEQUENCE [GENOMIC DNA]</scope>
    <source>
        <strain>ATCC BAA-1114 / GMI1000</strain>
    </source>
</reference>
<reference key="2">
    <citation type="journal article" date="2002" name="Nature">
        <title>Genome sequence of the plant pathogen Ralstonia solanacearum.</title>
        <authorList>
            <person name="Salanoubat M."/>
            <person name="Genin S."/>
            <person name="Artiguenave F."/>
            <person name="Gouzy J."/>
            <person name="Mangenot S."/>
            <person name="Arlat M."/>
            <person name="Billault A."/>
            <person name="Brottier P."/>
            <person name="Camus J.-C."/>
            <person name="Cattolico L."/>
            <person name="Chandler M."/>
            <person name="Choisne N."/>
            <person name="Claudel-Renard C."/>
            <person name="Cunnac S."/>
            <person name="Demange N."/>
            <person name="Gaspin C."/>
            <person name="Lavie M."/>
            <person name="Moisan A."/>
            <person name="Robert C."/>
            <person name="Saurin W."/>
            <person name="Schiex T."/>
            <person name="Siguier P."/>
            <person name="Thebault P."/>
            <person name="Whalen M."/>
            <person name="Wincker P."/>
            <person name="Levy M."/>
            <person name="Weissenbach J."/>
            <person name="Boucher C.A."/>
        </authorList>
    </citation>
    <scope>NUCLEOTIDE SEQUENCE [LARGE SCALE GENOMIC DNA]</scope>
    <source>
        <strain>ATCC BAA-1114 / GMI1000</strain>
    </source>
</reference>
<organism>
    <name type="scientific">Ralstonia nicotianae (strain ATCC BAA-1114 / GMI1000)</name>
    <name type="common">Ralstonia solanacearum</name>
    <dbReference type="NCBI Taxonomy" id="267608"/>
    <lineage>
        <taxon>Bacteria</taxon>
        <taxon>Pseudomonadati</taxon>
        <taxon>Pseudomonadota</taxon>
        <taxon>Betaproteobacteria</taxon>
        <taxon>Burkholderiales</taxon>
        <taxon>Burkholderiaceae</taxon>
        <taxon>Ralstonia</taxon>
        <taxon>Ralstonia solanacearum species complex</taxon>
    </lineage>
</organism>
<protein>
    <recommendedName>
        <fullName>Hypersensitivity response secretion protein HrcV</fullName>
    </recommendedName>
</protein>
<dbReference type="EMBL" id="AJ245811">
    <property type="protein sequence ID" value="CAB58250.1"/>
    <property type="molecule type" value="Genomic_DNA"/>
</dbReference>
<dbReference type="EMBL" id="M99633">
    <property type="status" value="NOT_ANNOTATED_CDS"/>
    <property type="molecule type" value="Genomic_DNA"/>
</dbReference>
<dbReference type="EMBL" id="AL646053">
    <property type="protein sequence ID" value="CAD18014.1"/>
    <property type="molecule type" value="Genomic_DNA"/>
</dbReference>
<dbReference type="PIR" id="S35251">
    <property type="entry name" value="S35251"/>
</dbReference>
<dbReference type="SMR" id="P35656"/>
<dbReference type="STRING" id="267608.RSp0863"/>
<dbReference type="EnsemblBacteria" id="CAD18014">
    <property type="protein sequence ID" value="CAD18014"/>
    <property type="gene ID" value="RSp0863"/>
</dbReference>
<dbReference type="KEGG" id="rso:RSp0863"/>
<dbReference type="eggNOG" id="COG4789">
    <property type="taxonomic scope" value="Bacteria"/>
</dbReference>
<dbReference type="HOGENOM" id="CLU_015346_3_0_4"/>
<dbReference type="PHI-base" id="PHI:10248"/>
<dbReference type="Proteomes" id="UP000001436">
    <property type="component" value="Plasmid megaplasmid Rsp"/>
</dbReference>
<dbReference type="GO" id="GO:0005886">
    <property type="term" value="C:plasma membrane"/>
    <property type="evidence" value="ECO:0007669"/>
    <property type="project" value="UniProtKB-SubCell"/>
</dbReference>
<dbReference type="GO" id="GO:0009306">
    <property type="term" value="P:protein secretion"/>
    <property type="evidence" value="ECO:0007669"/>
    <property type="project" value="InterPro"/>
</dbReference>
<dbReference type="GO" id="GO:0052040">
    <property type="term" value="P:symbiont-mediated perturbation of host programmed cell death"/>
    <property type="evidence" value="ECO:0007669"/>
    <property type="project" value="UniProtKB-KW"/>
</dbReference>
<dbReference type="Gene3D" id="3.40.30.60">
    <property type="entry name" value="FHIPEP family, domain 1"/>
    <property type="match status" value="1"/>
</dbReference>
<dbReference type="Gene3D" id="1.10.8.540">
    <property type="entry name" value="FHIPEP family, domain 3"/>
    <property type="match status" value="1"/>
</dbReference>
<dbReference type="Gene3D" id="3.40.50.12790">
    <property type="entry name" value="FHIPEP family, domain 4"/>
    <property type="match status" value="1"/>
</dbReference>
<dbReference type="InterPro" id="IPR042194">
    <property type="entry name" value="FHIPEP_1"/>
</dbReference>
<dbReference type="InterPro" id="IPR042193">
    <property type="entry name" value="FHIPEP_3"/>
</dbReference>
<dbReference type="InterPro" id="IPR042196">
    <property type="entry name" value="FHIPEP_4"/>
</dbReference>
<dbReference type="InterPro" id="IPR025505">
    <property type="entry name" value="FHIPEP_CS"/>
</dbReference>
<dbReference type="InterPro" id="IPR001712">
    <property type="entry name" value="T3SS_FHIPEP"/>
</dbReference>
<dbReference type="InterPro" id="IPR006302">
    <property type="entry name" value="T3SS_HrcV"/>
</dbReference>
<dbReference type="NCBIfam" id="TIGR01399">
    <property type="entry name" value="hrcV"/>
    <property type="match status" value="1"/>
</dbReference>
<dbReference type="PANTHER" id="PTHR30161">
    <property type="entry name" value="FLAGELLAR EXPORT PROTEIN, MEMBRANE FLHA SUBUNIT-RELATED"/>
    <property type="match status" value="1"/>
</dbReference>
<dbReference type="PANTHER" id="PTHR30161:SF2">
    <property type="entry name" value="INVASION PROTEIN INVA"/>
    <property type="match status" value="1"/>
</dbReference>
<dbReference type="Pfam" id="PF00771">
    <property type="entry name" value="FHIPEP"/>
    <property type="match status" value="1"/>
</dbReference>
<dbReference type="PIRSF" id="PIRSF005419">
    <property type="entry name" value="FlhA"/>
    <property type="match status" value="1"/>
</dbReference>
<dbReference type="PRINTS" id="PR00949">
    <property type="entry name" value="TYPE3IMAPROT"/>
</dbReference>
<dbReference type="PROSITE" id="PS00994">
    <property type="entry name" value="FHIPEP"/>
    <property type="match status" value="1"/>
</dbReference>